<accession>A5DAR2</accession>
<reference key="1">
    <citation type="journal article" date="2009" name="Nature">
        <title>Evolution of pathogenicity and sexual reproduction in eight Candida genomes.</title>
        <authorList>
            <person name="Butler G."/>
            <person name="Rasmussen M.D."/>
            <person name="Lin M.F."/>
            <person name="Santos M.A.S."/>
            <person name="Sakthikumar S."/>
            <person name="Munro C.A."/>
            <person name="Rheinbay E."/>
            <person name="Grabherr M."/>
            <person name="Forche A."/>
            <person name="Reedy J.L."/>
            <person name="Agrafioti I."/>
            <person name="Arnaud M.B."/>
            <person name="Bates S."/>
            <person name="Brown A.J.P."/>
            <person name="Brunke S."/>
            <person name="Costanzo M.C."/>
            <person name="Fitzpatrick D.A."/>
            <person name="de Groot P.W.J."/>
            <person name="Harris D."/>
            <person name="Hoyer L.L."/>
            <person name="Hube B."/>
            <person name="Klis F.M."/>
            <person name="Kodira C."/>
            <person name="Lennard N."/>
            <person name="Logue M.E."/>
            <person name="Martin R."/>
            <person name="Neiman A.M."/>
            <person name="Nikolaou E."/>
            <person name="Quail M.A."/>
            <person name="Quinn J."/>
            <person name="Santos M.C."/>
            <person name="Schmitzberger F.F."/>
            <person name="Sherlock G."/>
            <person name="Shah P."/>
            <person name="Silverstein K.A.T."/>
            <person name="Skrzypek M.S."/>
            <person name="Soll D."/>
            <person name="Staggs R."/>
            <person name="Stansfield I."/>
            <person name="Stumpf M.P.H."/>
            <person name="Sudbery P.E."/>
            <person name="Srikantha T."/>
            <person name="Zeng Q."/>
            <person name="Berman J."/>
            <person name="Berriman M."/>
            <person name="Heitman J."/>
            <person name="Gow N.A.R."/>
            <person name="Lorenz M.C."/>
            <person name="Birren B.W."/>
            <person name="Kellis M."/>
            <person name="Cuomo C.A."/>
        </authorList>
    </citation>
    <scope>NUCLEOTIDE SEQUENCE [LARGE SCALE GENOMIC DNA]</scope>
    <source>
        <strain>ATCC 6260 / CBS 566 / DSM 6381 / JCM 1539 / NBRC 10279 / NRRL Y-324</strain>
    </source>
</reference>
<feature type="chain" id="PRO_0000294644" description="ATP-dependent RNA helicase DBP7">
    <location>
        <begin position="1"/>
        <end position="747"/>
    </location>
</feature>
<feature type="domain" description="Helicase ATP-binding" evidence="2">
    <location>
        <begin position="168"/>
        <end position="363"/>
    </location>
</feature>
<feature type="domain" description="Helicase C-terminal" evidence="3">
    <location>
        <begin position="401"/>
        <end position="626"/>
    </location>
</feature>
<feature type="region of interest" description="Disordered" evidence="4">
    <location>
        <begin position="1"/>
        <end position="102"/>
    </location>
</feature>
<feature type="region of interest" description="Disordered" evidence="4">
    <location>
        <begin position="111"/>
        <end position="130"/>
    </location>
</feature>
<feature type="region of interest" description="Disordered" evidence="4">
    <location>
        <begin position="700"/>
        <end position="729"/>
    </location>
</feature>
<feature type="short sequence motif" description="Q motif">
    <location>
        <begin position="135"/>
        <end position="164"/>
    </location>
</feature>
<feature type="short sequence motif" description="DEAD box">
    <location>
        <begin position="295"/>
        <end position="298"/>
    </location>
</feature>
<feature type="compositionally biased region" description="Polar residues" evidence="4">
    <location>
        <begin position="15"/>
        <end position="24"/>
    </location>
</feature>
<feature type="compositionally biased region" description="Basic and acidic residues" evidence="4">
    <location>
        <begin position="75"/>
        <end position="96"/>
    </location>
</feature>
<feature type="compositionally biased region" description="Basic and acidic residues" evidence="4">
    <location>
        <begin position="111"/>
        <end position="123"/>
    </location>
</feature>
<feature type="compositionally biased region" description="Basic and acidic residues" evidence="4">
    <location>
        <begin position="712"/>
        <end position="728"/>
    </location>
</feature>
<feature type="binding site" evidence="2">
    <location>
        <begin position="181"/>
        <end position="188"/>
    </location>
    <ligand>
        <name>ATP</name>
        <dbReference type="ChEBI" id="CHEBI:30616"/>
    </ligand>
</feature>
<dbReference type="EC" id="3.6.4.13"/>
<dbReference type="EMBL" id="CH408155">
    <property type="protein sequence ID" value="EDK36269.2"/>
    <property type="status" value="ALT_INIT"/>
    <property type="molecule type" value="Genomic_DNA"/>
</dbReference>
<dbReference type="RefSeq" id="XP_001486990.1">
    <property type="nucleotide sequence ID" value="XM_001486940.1"/>
</dbReference>
<dbReference type="SMR" id="A5DAR2"/>
<dbReference type="FunCoup" id="A5DAR2">
    <property type="interactions" value="798"/>
</dbReference>
<dbReference type="STRING" id="294746.A5DAR2"/>
<dbReference type="GeneID" id="5129233"/>
<dbReference type="KEGG" id="pgu:PGUG_00367"/>
<dbReference type="eggNOG" id="KOG0348">
    <property type="taxonomic scope" value="Eukaryota"/>
</dbReference>
<dbReference type="HOGENOM" id="CLU_003041_26_2_1"/>
<dbReference type="InParanoid" id="A5DAR2"/>
<dbReference type="OrthoDB" id="422663at2759"/>
<dbReference type="Proteomes" id="UP000001997">
    <property type="component" value="Unassembled WGS sequence"/>
</dbReference>
<dbReference type="GO" id="GO:0005730">
    <property type="term" value="C:nucleolus"/>
    <property type="evidence" value="ECO:0007669"/>
    <property type="project" value="UniProtKB-SubCell"/>
</dbReference>
<dbReference type="GO" id="GO:0005524">
    <property type="term" value="F:ATP binding"/>
    <property type="evidence" value="ECO:0007669"/>
    <property type="project" value="UniProtKB-KW"/>
</dbReference>
<dbReference type="GO" id="GO:0016887">
    <property type="term" value="F:ATP hydrolysis activity"/>
    <property type="evidence" value="ECO:0007669"/>
    <property type="project" value="RHEA"/>
</dbReference>
<dbReference type="GO" id="GO:0003723">
    <property type="term" value="F:RNA binding"/>
    <property type="evidence" value="ECO:0007669"/>
    <property type="project" value="UniProtKB-KW"/>
</dbReference>
<dbReference type="GO" id="GO:0003724">
    <property type="term" value="F:RNA helicase activity"/>
    <property type="evidence" value="ECO:0007669"/>
    <property type="project" value="UniProtKB-EC"/>
</dbReference>
<dbReference type="GO" id="GO:0006364">
    <property type="term" value="P:rRNA processing"/>
    <property type="evidence" value="ECO:0007669"/>
    <property type="project" value="UniProtKB-KW"/>
</dbReference>
<dbReference type="CDD" id="cd18787">
    <property type="entry name" value="SF2_C_DEAD"/>
    <property type="match status" value="1"/>
</dbReference>
<dbReference type="Gene3D" id="3.40.50.300">
    <property type="entry name" value="P-loop containing nucleotide triphosphate hydrolases"/>
    <property type="match status" value="2"/>
</dbReference>
<dbReference type="InterPro" id="IPR011545">
    <property type="entry name" value="DEAD/DEAH_box_helicase_dom"/>
</dbReference>
<dbReference type="InterPro" id="IPR014001">
    <property type="entry name" value="Helicase_ATP-bd"/>
</dbReference>
<dbReference type="InterPro" id="IPR001650">
    <property type="entry name" value="Helicase_C-like"/>
</dbReference>
<dbReference type="InterPro" id="IPR027417">
    <property type="entry name" value="P-loop_NTPase"/>
</dbReference>
<dbReference type="InterPro" id="IPR014014">
    <property type="entry name" value="RNA_helicase_DEAD_Q_motif"/>
</dbReference>
<dbReference type="InterPro" id="IPR025313">
    <property type="entry name" value="SPB4-like_CTE"/>
</dbReference>
<dbReference type="PANTHER" id="PTHR24031">
    <property type="entry name" value="RNA HELICASE"/>
    <property type="match status" value="1"/>
</dbReference>
<dbReference type="Pfam" id="PF13959">
    <property type="entry name" value="CTE_SPB4"/>
    <property type="match status" value="1"/>
</dbReference>
<dbReference type="Pfam" id="PF00270">
    <property type="entry name" value="DEAD"/>
    <property type="match status" value="1"/>
</dbReference>
<dbReference type="Pfam" id="PF00271">
    <property type="entry name" value="Helicase_C"/>
    <property type="match status" value="1"/>
</dbReference>
<dbReference type="SMART" id="SM00487">
    <property type="entry name" value="DEXDc"/>
    <property type="match status" value="1"/>
</dbReference>
<dbReference type="SMART" id="SM01178">
    <property type="entry name" value="DUF4217"/>
    <property type="match status" value="1"/>
</dbReference>
<dbReference type="SMART" id="SM00490">
    <property type="entry name" value="HELICc"/>
    <property type="match status" value="1"/>
</dbReference>
<dbReference type="SUPFAM" id="SSF52540">
    <property type="entry name" value="P-loop containing nucleoside triphosphate hydrolases"/>
    <property type="match status" value="2"/>
</dbReference>
<dbReference type="PROSITE" id="PS51192">
    <property type="entry name" value="HELICASE_ATP_BIND_1"/>
    <property type="match status" value="1"/>
</dbReference>
<dbReference type="PROSITE" id="PS51194">
    <property type="entry name" value="HELICASE_CTER"/>
    <property type="match status" value="1"/>
</dbReference>
<dbReference type="PROSITE" id="PS51195">
    <property type="entry name" value="Q_MOTIF"/>
    <property type="match status" value="1"/>
</dbReference>
<name>DBP7_PICGU</name>
<comment type="function">
    <text evidence="1">ATP-binding RNA helicase involved in the biogenesis of 60S ribosomal subunits and is required for the normal formation of 25S and 5.8S rRNAs.</text>
</comment>
<comment type="catalytic activity">
    <reaction>
        <text>ATP + H2O = ADP + phosphate + H(+)</text>
        <dbReference type="Rhea" id="RHEA:13065"/>
        <dbReference type="ChEBI" id="CHEBI:15377"/>
        <dbReference type="ChEBI" id="CHEBI:15378"/>
        <dbReference type="ChEBI" id="CHEBI:30616"/>
        <dbReference type="ChEBI" id="CHEBI:43474"/>
        <dbReference type="ChEBI" id="CHEBI:456216"/>
        <dbReference type="EC" id="3.6.4.13"/>
    </reaction>
</comment>
<comment type="subcellular location">
    <subcellularLocation>
        <location evidence="1">Nucleus</location>
        <location evidence="1">Nucleolus</location>
    </subcellularLocation>
</comment>
<comment type="domain">
    <text>The Q motif is unique to and characteristic of the DEAD box family of RNA helicases and controls ATP binding and hydrolysis.</text>
</comment>
<comment type="miscellaneous">
    <text>Present with 1460 molecules/cell in log phase SD medium.</text>
</comment>
<comment type="similarity">
    <text evidence="5">Belongs to the DEAD box helicase family. DDX31/DBP7 subfamily.</text>
</comment>
<comment type="sequence caution" evidence="5">
    <conflict type="erroneous initiation">
        <sequence resource="EMBL-CDS" id="EDK36269"/>
    </conflict>
</comment>
<gene>
    <name type="primary">DBP7</name>
    <name type="ORF">PGUG_00367</name>
</gene>
<proteinExistence type="inferred from homology"/>
<evidence type="ECO:0000250" key="1"/>
<evidence type="ECO:0000255" key="2">
    <source>
        <dbReference type="PROSITE-ProRule" id="PRU00541"/>
    </source>
</evidence>
<evidence type="ECO:0000255" key="3">
    <source>
        <dbReference type="PROSITE-ProRule" id="PRU00542"/>
    </source>
</evidence>
<evidence type="ECO:0000256" key="4">
    <source>
        <dbReference type="SAM" id="MobiDB-lite"/>
    </source>
</evidence>
<evidence type="ECO:0000305" key="5"/>
<organism>
    <name type="scientific">Meyerozyma guilliermondii (strain ATCC 6260 / CBS 566 / DSM 6381 / JCM 1539 / NBRC 10279 / NRRL Y-324)</name>
    <name type="common">Yeast</name>
    <name type="synonym">Candida guilliermondii</name>
    <dbReference type="NCBI Taxonomy" id="294746"/>
    <lineage>
        <taxon>Eukaryota</taxon>
        <taxon>Fungi</taxon>
        <taxon>Dikarya</taxon>
        <taxon>Ascomycota</taxon>
        <taxon>Saccharomycotina</taxon>
        <taxon>Pichiomycetes</taxon>
        <taxon>Debaryomycetaceae</taxon>
        <taxon>Meyerozyma</taxon>
    </lineage>
</organism>
<sequence>MDDDGLLLNFAAPDSNASSKSSAQKPVKVSGGRWKDRRKLQLSLSGRGRNKRAETGVNKESIAQPRDFSSSKPQSFREEQLAKRPKYFESRGEGGKNETYVSSLFTSNTKSKLENEKVEEEKTYLPSNAPMKGADDFNGLGLNDNLVHHLTESLRFKNPTQIQKSVIPSLLSTSRDLFVKAQTGSGKTLSFLLPILHKLMQEKKNPITRESGVFAIVLVPTRELANQIYGVLETLTRCHHQIVPGIVIGGEKKKSEKARIRKGVNILVATPGRLADHIENTTSLDLSQLRYLILDEGDRLIDLGFEETITKITDTITRCSRISESTQKWQGLPTKRVNVLCSATMENNVEKLGSIILNNPEQISIDTSKSREGDEIDSKSMAPAQLTQRVVVVPAKLRLVTLSAVLKEVAKTAPTSSTEIVRTIVFFSCSDSVNFHYEAFKRNGSEFRKARNAETNRFEMVTVGEDEANAEGSDTEIPKISSAPTISANSVVYKLHGSLTQQVRTSTLQSFVQAVPFDNSENNYNHLILLCTDVASRGLDLPNISSVVEYDPPFSVQDHLHRIGRTARLGNKGSSYLFLLPGIEEGYVDGKIRVVHPEGSIRITNYETILQNAFGDSSEIKKSDPKSKQGKWDMHATTWHLDIERWLLEDAASHESAKQAFTSHIRAYATHLSSEKTFFNVKTLHLGHLAKSFGLREPPKKLGSLATKSSSTRKEYGEKSRKLEDPRKKMLRMAKLAASSASSEFNY</sequence>
<keyword id="KW-0067">ATP-binding</keyword>
<keyword id="KW-0347">Helicase</keyword>
<keyword id="KW-0378">Hydrolase</keyword>
<keyword id="KW-0547">Nucleotide-binding</keyword>
<keyword id="KW-0539">Nucleus</keyword>
<keyword id="KW-1185">Reference proteome</keyword>
<keyword id="KW-0690">Ribosome biogenesis</keyword>
<keyword id="KW-0694">RNA-binding</keyword>
<keyword id="KW-0698">rRNA processing</keyword>
<protein>
    <recommendedName>
        <fullName>ATP-dependent RNA helicase DBP7</fullName>
        <ecNumber>3.6.4.13</ecNumber>
    </recommendedName>
</protein>